<gene>
    <name evidence="1" type="primary">acsA</name>
    <name type="ordered locus">CC_3581</name>
</gene>
<accession>Q9A2I0</accession>
<sequence length="647" mass="70836">MVSDGQVFPVPADLARDAHIDAAAYDAALARVEADPEGYWRDIAARLDWITPPTKIKDVSYAKEDFRIRWYEDGVLNVSANCIDRHLPAKKDDVALVFEGDEPGTSSTLTYGQLHEEVCRMANVLKAQGVKKGDRVTIYLPMVPLAAVAMLACARIGAVHSVVFGGFSPDSIAGRIQDCASHFVITADEGRRGGRRVPLKANIDEALKHCPWVGKVLMIRWTGADVPLKAGRDIVWQDVRDTVSADCPPEPMNAEDPLFILYTSGSTGKPKGVLHTTGGYLAWASWTFWAVFDYKPGEVFWCTADVGWVTGHSYVVYGPLANGGTSLIFEGVPNYPTPSRFWEVIDKHQVSIFYTAPTALRALMREGDAHVTKNDLSSLRLLGSVGEPINPEAWLWYHRVVGKEKLPIVDTWWQTETGGMLITPLPGATALKPGSASKPLPGVKPQLVDAEGKFLDGATEGNLVITDSWPGQMRTVYGDHQRFFETYFSTYPGKYFTGDGCRRDADGYYWITGRVDDVINVSGHRLGTAEIESALVAHETVAEAAVVGYPHDIKGQGVYAYVTLKAGIEATDALRKDLVLWVRHEIGPFAAPDVIQWAPGLPKTRSGKIMRRILRKIAENELGSLGDTSTLADPSVVDDLVKNRAGT</sequence>
<proteinExistence type="inferred from homology"/>
<feature type="chain" id="PRO_0000208359" description="Acetyl-coenzyme A synthetase">
    <location>
        <begin position="1"/>
        <end position="647"/>
    </location>
</feature>
<feature type="binding site" evidence="1">
    <location>
        <begin position="192"/>
        <end position="195"/>
    </location>
    <ligand>
        <name>CoA</name>
        <dbReference type="ChEBI" id="CHEBI:57287"/>
    </ligand>
</feature>
<feature type="binding site" evidence="1">
    <location>
        <position position="310"/>
    </location>
    <ligand>
        <name>CoA</name>
        <dbReference type="ChEBI" id="CHEBI:57287"/>
    </ligand>
</feature>
<feature type="binding site" evidence="1">
    <location>
        <position position="334"/>
    </location>
    <ligand>
        <name>CoA</name>
        <dbReference type="ChEBI" id="CHEBI:57287"/>
    </ligand>
</feature>
<feature type="binding site" evidence="1">
    <location>
        <begin position="386"/>
        <end position="388"/>
    </location>
    <ligand>
        <name>ATP</name>
        <dbReference type="ChEBI" id="CHEBI:30616"/>
    </ligand>
</feature>
<feature type="binding site" evidence="1">
    <location>
        <begin position="410"/>
        <end position="415"/>
    </location>
    <ligand>
        <name>ATP</name>
        <dbReference type="ChEBI" id="CHEBI:30616"/>
    </ligand>
</feature>
<feature type="binding site" evidence="1">
    <location>
        <position position="499"/>
    </location>
    <ligand>
        <name>ATP</name>
        <dbReference type="ChEBI" id="CHEBI:30616"/>
    </ligand>
</feature>
<feature type="binding site" evidence="1">
    <location>
        <position position="514"/>
    </location>
    <ligand>
        <name>ATP</name>
        <dbReference type="ChEBI" id="CHEBI:30616"/>
    </ligand>
</feature>
<feature type="binding site" evidence="1">
    <location>
        <position position="522"/>
    </location>
    <ligand>
        <name>CoA</name>
        <dbReference type="ChEBI" id="CHEBI:57287"/>
    </ligand>
</feature>
<feature type="binding site" evidence="1">
    <location>
        <position position="525"/>
    </location>
    <ligand>
        <name>ATP</name>
        <dbReference type="ChEBI" id="CHEBI:30616"/>
    </ligand>
</feature>
<feature type="binding site" evidence="1">
    <location>
        <position position="536"/>
    </location>
    <ligand>
        <name>Mg(2+)</name>
        <dbReference type="ChEBI" id="CHEBI:18420"/>
    </ligand>
</feature>
<feature type="binding site" evidence="1">
    <location>
        <position position="538"/>
    </location>
    <ligand>
        <name>Mg(2+)</name>
        <dbReference type="ChEBI" id="CHEBI:18420"/>
    </ligand>
</feature>
<feature type="binding site" evidence="1">
    <location>
        <position position="541"/>
    </location>
    <ligand>
        <name>Mg(2+)</name>
        <dbReference type="ChEBI" id="CHEBI:18420"/>
    </ligand>
</feature>
<feature type="binding site" evidence="1">
    <location>
        <position position="583"/>
    </location>
    <ligand>
        <name>CoA</name>
        <dbReference type="ChEBI" id="CHEBI:57287"/>
    </ligand>
</feature>
<feature type="modified residue" description="N6-acetyllysine" evidence="1">
    <location>
        <position position="608"/>
    </location>
</feature>
<keyword id="KW-0007">Acetylation</keyword>
<keyword id="KW-0067">ATP-binding</keyword>
<keyword id="KW-0436">Ligase</keyword>
<keyword id="KW-0460">Magnesium</keyword>
<keyword id="KW-0479">Metal-binding</keyword>
<keyword id="KW-0547">Nucleotide-binding</keyword>
<keyword id="KW-1185">Reference proteome</keyword>
<protein>
    <recommendedName>
        <fullName evidence="1">Acetyl-coenzyme A synthetase</fullName>
        <shortName evidence="1">AcCoA synthetase</shortName>
        <shortName evidence="1">Acs</shortName>
        <ecNumber evidence="1">6.2.1.1</ecNumber>
    </recommendedName>
    <alternativeName>
        <fullName evidence="1">Acetate--CoA ligase</fullName>
    </alternativeName>
    <alternativeName>
        <fullName evidence="1">Acyl-activating enzyme</fullName>
    </alternativeName>
</protein>
<organism>
    <name type="scientific">Caulobacter vibrioides (strain ATCC 19089 / CIP 103742 / CB 15)</name>
    <name type="common">Caulobacter crescentus</name>
    <dbReference type="NCBI Taxonomy" id="190650"/>
    <lineage>
        <taxon>Bacteria</taxon>
        <taxon>Pseudomonadati</taxon>
        <taxon>Pseudomonadota</taxon>
        <taxon>Alphaproteobacteria</taxon>
        <taxon>Caulobacterales</taxon>
        <taxon>Caulobacteraceae</taxon>
        <taxon>Caulobacter</taxon>
    </lineage>
</organism>
<evidence type="ECO:0000255" key="1">
    <source>
        <dbReference type="HAMAP-Rule" id="MF_01123"/>
    </source>
</evidence>
<dbReference type="EC" id="6.2.1.1" evidence="1"/>
<dbReference type="EMBL" id="AE005673">
    <property type="protein sequence ID" value="AAK25543.1"/>
    <property type="molecule type" value="Genomic_DNA"/>
</dbReference>
<dbReference type="PIR" id="C87693">
    <property type="entry name" value="C87693"/>
</dbReference>
<dbReference type="RefSeq" id="NP_422375.1">
    <property type="nucleotide sequence ID" value="NC_002696.2"/>
</dbReference>
<dbReference type="RefSeq" id="WP_010921410.1">
    <property type="nucleotide sequence ID" value="NC_002696.2"/>
</dbReference>
<dbReference type="SMR" id="Q9A2I0"/>
<dbReference type="STRING" id="190650.CC_3581"/>
<dbReference type="EnsemblBacteria" id="AAK25543">
    <property type="protein sequence ID" value="AAK25543"/>
    <property type="gene ID" value="CC_3581"/>
</dbReference>
<dbReference type="KEGG" id="ccr:CC_3581"/>
<dbReference type="PATRIC" id="fig|190650.5.peg.3585"/>
<dbReference type="eggNOG" id="COG0365">
    <property type="taxonomic scope" value="Bacteria"/>
</dbReference>
<dbReference type="HOGENOM" id="CLU_000022_3_6_5"/>
<dbReference type="BioCyc" id="CAULO:CC3581-MONOMER"/>
<dbReference type="Proteomes" id="UP000001816">
    <property type="component" value="Chromosome"/>
</dbReference>
<dbReference type="GO" id="GO:0005829">
    <property type="term" value="C:cytosol"/>
    <property type="evidence" value="ECO:0007669"/>
    <property type="project" value="TreeGrafter"/>
</dbReference>
<dbReference type="GO" id="GO:0003987">
    <property type="term" value="F:acetate-CoA ligase activity"/>
    <property type="evidence" value="ECO:0007669"/>
    <property type="project" value="UniProtKB-UniRule"/>
</dbReference>
<dbReference type="GO" id="GO:0016208">
    <property type="term" value="F:AMP binding"/>
    <property type="evidence" value="ECO:0007669"/>
    <property type="project" value="InterPro"/>
</dbReference>
<dbReference type="GO" id="GO:0005524">
    <property type="term" value="F:ATP binding"/>
    <property type="evidence" value="ECO:0007669"/>
    <property type="project" value="UniProtKB-KW"/>
</dbReference>
<dbReference type="GO" id="GO:0046872">
    <property type="term" value="F:metal ion binding"/>
    <property type="evidence" value="ECO:0007669"/>
    <property type="project" value="UniProtKB-KW"/>
</dbReference>
<dbReference type="GO" id="GO:0019427">
    <property type="term" value="P:acetyl-CoA biosynthetic process from acetate"/>
    <property type="evidence" value="ECO:0007669"/>
    <property type="project" value="InterPro"/>
</dbReference>
<dbReference type="CDD" id="cd05966">
    <property type="entry name" value="ACS"/>
    <property type="match status" value="1"/>
</dbReference>
<dbReference type="FunFam" id="3.30.300.30:FF:000004">
    <property type="entry name" value="Acetyl-coenzyme A synthetase"/>
    <property type="match status" value="1"/>
</dbReference>
<dbReference type="FunFam" id="3.40.50.12780:FF:000001">
    <property type="entry name" value="Acetyl-coenzyme A synthetase"/>
    <property type="match status" value="1"/>
</dbReference>
<dbReference type="Gene3D" id="3.30.300.30">
    <property type="match status" value="1"/>
</dbReference>
<dbReference type="Gene3D" id="3.40.50.12780">
    <property type="entry name" value="N-terminal domain of ligase-like"/>
    <property type="match status" value="1"/>
</dbReference>
<dbReference type="HAMAP" id="MF_01123">
    <property type="entry name" value="Ac_CoA_synth"/>
    <property type="match status" value="1"/>
</dbReference>
<dbReference type="InterPro" id="IPR011904">
    <property type="entry name" value="Ac_CoA_lig"/>
</dbReference>
<dbReference type="InterPro" id="IPR032387">
    <property type="entry name" value="ACAS_N"/>
</dbReference>
<dbReference type="InterPro" id="IPR025110">
    <property type="entry name" value="AMP-bd_C"/>
</dbReference>
<dbReference type="InterPro" id="IPR045851">
    <property type="entry name" value="AMP-bd_C_sf"/>
</dbReference>
<dbReference type="InterPro" id="IPR020845">
    <property type="entry name" value="AMP-binding_CS"/>
</dbReference>
<dbReference type="InterPro" id="IPR000873">
    <property type="entry name" value="AMP-dep_synth/lig_dom"/>
</dbReference>
<dbReference type="InterPro" id="IPR042099">
    <property type="entry name" value="ANL_N_sf"/>
</dbReference>
<dbReference type="NCBIfam" id="TIGR02188">
    <property type="entry name" value="Ac_CoA_lig_AcsA"/>
    <property type="match status" value="1"/>
</dbReference>
<dbReference type="NCBIfam" id="NF001208">
    <property type="entry name" value="PRK00174.1"/>
    <property type="match status" value="1"/>
</dbReference>
<dbReference type="PANTHER" id="PTHR24095">
    <property type="entry name" value="ACETYL-COENZYME A SYNTHETASE"/>
    <property type="match status" value="1"/>
</dbReference>
<dbReference type="PANTHER" id="PTHR24095:SF14">
    <property type="entry name" value="ACETYL-COENZYME A SYNTHETASE 1"/>
    <property type="match status" value="1"/>
</dbReference>
<dbReference type="Pfam" id="PF16177">
    <property type="entry name" value="ACAS_N"/>
    <property type="match status" value="1"/>
</dbReference>
<dbReference type="Pfam" id="PF00501">
    <property type="entry name" value="AMP-binding"/>
    <property type="match status" value="1"/>
</dbReference>
<dbReference type="Pfam" id="PF13193">
    <property type="entry name" value="AMP-binding_C"/>
    <property type="match status" value="1"/>
</dbReference>
<dbReference type="SUPFAM" id="SSF56801">
    <property type="entry name" value="Acetyl-CoA synthetase-like"/>
    <property type="match status" value="1"/>
</dbReference>
<dbReference type="PROSITE" id="PS00455">
    <property type="entry name" value="AMP_BINDING"/>
    <property type="match status" value="1"/>
</dbReference>
<comment type="function">
    <text evidence="1">Catalyzes the conversion of acetate into acetyl-CoA (AcCoA), an essential intermediate at the junction of anabolic and catabolic pathways. AcsA undergoes a two-step reaction. In the first half reaction, AcsA combines acetate with ATP to form acetyl-adenylate (AcAMP) intermediate. In the second half reaction, it can then transfer the acetyl group from AcAMP to the sulfhydryl group of CoA, forming the product AcCoA.</text>
</comment>
<comment type="catalytic activity">
    <reaction evidence="1">
        <text>acetate + ATP + CoA = acetyl-CoA + AMP + diphosphate</text>
        <dbReference type="Rhea" id="RHEA:23176"/>
        <dbReference type="ChEBI" id="CHEBI:30089"/>
        <dbReference type="ChEBI" id="CHEBI:30616"/>
        <dbReference type="ChEBI" id="CHEBI:33019"/>
        <dbReference type="ChEBI" id="CHEBI:57287"/>
        <dbReference type="ChEBI" id="CHEBI:57288"/>
        <dbReference type="ChEBI" id="CHEBI:456215"/>
        <dbReference type="EC" id="6.2.1.1"/>
    </reaction>
</comment>
<comment type="cofactor">
    <cofactor evidence="1">
        <name>Mg(2+)</name>
        <dbReference type="ChEBI" id="CHEBI:18420"/>
    </cofactor>
</comment>
<comment type="PTM">
    <text evidence="1">Acetylated. Deacetylation by the SIR2-homolog deacetylase activates the enzyme.</text>
</comment>
<comment type="similarity">
    <text evidence="1">Belongs to the ATP-dependent AMP-binding enzyme family.</text>
</comment>
<reference key="1">
    <citation type="journal article" date="2001" name="Proc. Natl. Acad. Sci. U.S.A.">
        <title>Complete genome sequence of Caulobacter crescentus.</title>
        <authorList>
            <person name="Nierman W.C."/>
            <person name="Feldblyum T.V."/>
            <person name="Laub M.T."/>
            <person name="Paulsen I.T."/>
            <person name="Nelson K.E."/>
            <person name="Eisen J.A."/>
            <person name="Heidelberg J.F."/>
            <person name="Alley M.R.K."/>
            <person name="Ohta N."/>
            <person name="Maddock J.R."/>
            <person name="Potocka I."/>
            <person name="Nelson W.C."/>
            <person name="Newton A."/>
            <person name="Stephens C."/>
            <person name="Phadke N.D."/>
            <person name="Ely B."/>
            <person name="DeBoy R.T."/>
            <person name="Dodson R.J."/>
            <person name="Durkin A.S."/>
            <person name="Gwinn M.L."/>
            <person name="Haft D.H."/>
            <person name="Kolonay J.F."/>
            <person name="Smit J."/>
            <person name="Craven M.B."/>
            <person name="Khouri H.M."/>
            <person name="Shetty J."/>
            <person name="Berry K.J."/>
            <person name="Utterback T.R."/>
            <person name="Tran K."/>
            <person name="Wolf A.M."/>
            <person name="Vamathevan J.J."/>
            <person name="Ermolaeva M.D."/>
            <person name="White O."/>
            <person name="Salzberg S.L."/>
            <person name="Venter J.C."/>
            <person name="Shapiro L."/>
            <person name="Fraser C.M."/>
        </authorList>
    </citation>
    <scope>NUCLEOTIDE SEQUENCE [LARGE SCALE GENOMIC DNA]</scope>
    <source>
        <strain>ATCC 19089 / CIP 103742 / CB 15</strain>
    </source>
</reference>
<name>ACSA_CAUVC</name>